<accession>P66096</accession>
<accession>Q8CWS8</accession>
<accession>Q97RZ5</accession>
<comment type="function">
    <text evidence="1">Binds directly to 23S rRNA. The L1 stalk is quite mobile in the ribosome, and is involved in E site tRNA release.</text>
</comment>
<comment type="function">
    <text evidence="1">Protein L1 is also a translational repressor protein, it controls the translation of the L11 operon by binding to its mRNA.</text>
</comment>
<comment type="subunit">
    <text evidence="1">Part of the 50S ribosomal subunit.</text>
</comment>
<comment type="similarity">
    <text evidence="1">Belongs to the universal ribosomal protein uL1 family.</text>
</comment>
<evidence type="ECO:0000255" key="1">
    <source>
        <dbReference type="HAMAP-Rule" id="MF_01318"/>
    </source>
</evidence>
<evidence type="ECO:0000305" key="2"/>
<gene>
    <name evidence="1" type="primary">rplA</name>
    <name type="ordered locus">spr0556</name>
</gene>
<sequence length="229" mass="24495">MAKKSKQLRAALEKIDSTKAYSVEEAVALAKETNFAKFDATVEVAYNLNIDVKKADQQIRGAMVLPNGTGKTSRVLVFARGAKAEEAKAAGADFVGEDDLVAKINDGWLDFDVVIATPDMMALVGRLGRVLGPRNLMPNPKTGTVTMDVAKAVEESKGGKITYRADRAGNVQAIIGKVSFEAEKLVENFKAFNETIQKAKPATAKGTYVTNLTITTTQGVGIKVDVNSL</sequence>
<proteinExistence type="inferred from homology"/>
<name>RL1_STRR6</name>
<feature type="chain" id="PRO_0000125750" description="Large ribosomal subunit protein uL1">
    <location>
        <begin position="1"/>
        <end position="229"/>
    </location>
</feature>
<keyword id="KW-1185">Reference proteome</keyword>
<keyword id="KW-0678">Repressor</keyword>
<keyword id="KW-0687">Ribonucleoprotein</keyword>
<keyword id="KW-0689">Ribosomal protein</keyword>
<keyword id="KW-0694">RNA-binding</keyword>
<keyword id="KW-0699">rRNA-binding</keyword>
<keyword id="KW-0810">Translation regulation</keyword>
<keyword id="KW-0820">tRNA-binding</keyword>
<organism>
    <name type="scientific">Streptococcus pneumoniae (strain ATCC BAA-255 / R6)</name>
    <dbReference type="NCBI Taxonomy" id="171101"/>
    <lineage>
        <taxon>Bacteria</taxon>
        <taxon>Bacillati</taxon>
        <taxon>Bacillota</taxon>
        <taxon>Bacilli</taxon>
        <taxon>Lactobacillales</taxon>
        <taxon>Streptococcaceae</taxon>
        <taxon>Streptococcus</taxon>
    </lineage>
</organism>
<protein>
    <recommendedName>
        <fullName evidence="1">Large ribosomal subunit protein uL1</fullName>
    </recommendedName>
    <alternativeName>
        <fullName evidence="2">50S ribosomal protein L1</fullName>
    </alternativeName>
</protein>
<dbReference type="EMBL" id="AE007317">
    <property type="protein sequence ID" value="AAK99360.1"/>
    <property type="molecule type" value="Genomic_DNA"/>
</dbReference>
<dbReference type="PIR" id="D97941">
    <property type="entry name" value="D97941"/>
</dbReference>
<dbReference type="RefSeq" id="NP_358150.1">
    <property type="nucleotide sequence ID" value="NC_003098.1"/>
</dbReference>
<dbReference type="RefSeq" id="WP_001085675.1">
    <property type="nucleotide sequence ID" value="NC_003098.1"/>
</dbReference>
<dbReference type="SMR" id="P66096"/>
<dbReference type="STRING" id="171101.spr0556"/>
<dbReference type="GeneID" id="93739231"/>
<dbReference type="KEGG" id="spr:spr0556"/>
<dbReference type="PATRIC" id="fig|171101.6.peg.615"/>
<dbReference type="eggNOG" id="COG0081">
    <property type="taxonomic scope" value="Bacteria"/>
</dbReference>
<dbReference type="HOGENOM" id="CLU_062853_0_0_9"/>
<dbReference type="PRO" id="PR:P66096"/>
<dbReference type="Proteomes" id="UP000000586">
    <property type="component" value="Chromosome"/>
</dbReference>
<dbReference type="GO" id="GO:0015934">
    <property type="term" value="C:large ribosomal subunit"/>
    <property type="evidence" value="ECO:0007669"/>
    <property type="project" value="InterPro"/>
</dbReference>
<dbReference type="GO" id="GO:0019843">
    <property type="term" value="F:rRNA binding"/>
    <property type="evidence" value="ECO:0007669"/>
    <property type="project" value="UniProtKB-UniRule"/>
</dbReference>
<dbReference type="GO" id="GO:0003735">
    <property type="term" value="F:structural constituent of ribosome"/>
    <property type="evidence" value="ECO:0007669"/>
    <property type="project" value="InterPro"/>
</dbReference>
<dbReference type="GO" id="GO:0000049">
    <property type="term" value="F:tRNA binding"/>
    <property type="evidence" value="ECO:0007669"/>
    <property type="project" value="UniProtKB-KW"/>
</dbReference>
<dbReference type="GO" id="GO:0006417">
    <property type="term" value="P:regulation of translation"/>
    <property type="evidence" value="ECO:0007669"/>
    <property type="project" value="UniProtKB-KW"/>
</dbReference>
<dbReference type="GO" id="GO:0006412">
    <property type="term" value="P:translation"/>
    <property type="evidence" value="ECO:0007669"/>
    <property type="project" value="UniProtKB-UniRule"/>
</dbReference>
<dbReference type="CDD" id="cd00403">
    <property type="entry name" value="Ribosomal_L1"/>
    <property type="match status" value="1"/>
</dbReference>
<dbReference type="FunFam" id="3.40.50.790:FF:000001">
    <property type="entry name" value="50S ribosomal protein L1"/>
    <property type="match status" value="1"/>
</dbReference>
<dbReference type="Gene3D" id="3.30.190.20">
    <property type="match status" value="1"/>
</dbReference>
<dbReference type="Gene3D" id="3.40.50.790">
    <property type="match status" value="1"/>
</dbReference>
<dbReference type="HAMAP" id="MF_01318_B">
    <property type="entry name" value="Ribosomal_uL1_B"/>
    <property type="match status" value="1"/>
</dbReference>
<dbReference type="InterPro" id="IPR005878">
    <property type="entry name" value="Ribosom_uL1_bac-type"/>
</dbReference>
<dbReference type="InterPro" id="IPR002143">
    <property type="entry name" value="Ribosomal_uL1"/>
</dbReference>
<dbReference type="InterPro" id="IPR023674">
    <property type="entry name" value="Ribosomal_uL1-like"/>
</dbReference>
<dbReference type="InterPro" id="IPR028364">
    <property type="entry name" value="Ribosomal_uL1/biogenesis"/>
</dbReference>
<dbReference type="InterPro" id="IPR016095">
    <property type="entry name" value="Ribosomal_uL1_3-a/b-sand"/>
</dbReference>
<dbReference type="InterPro" id="IPR023673">
    <property type="entry name" value="Ribosomal_uL1_CS"/>
</dbReference>
<dbReference type="NCBIfam" id="TIGR01169">
    <property type="entry name" value="rplA_bact"/>
    <property type="match status" value="1"/>
</dbReference>
<dbReference type="PANTHER" id="PTHR36427">
    <property type="entry name" value="54S RIBOSOMAL PROTEIN L1, MITOCHONDRIAL"/>
    <property type="match status" value="1"/>
</dbReference>
<dbReference type="PANTHER" id="PTHR36427:SF3">
    <property type="entry name" value="LARGE RIBOSOMAL SUBUNIT PROTEIN UL1M"/>
    <property type="match status" value="1"/>
</dbReference>
<dbReference type="Pfam" id="PF00687">
    <property type="entry name" value="Ribosomal_L1"/>
    <property type="match status" value="1"/>
</dbReference>
<dbReference type="PIRSF" id="PIRSF002155">
    <property type="entry name" value="Ribosomal_L1"/>
    <property type="match status" value="1"/>
</dbReference>
<dbReference type="SUPFAM" id="SSF56808">
    <property type="entry name" value="Ribosomal protein L1"/>
    <property type="match status" value="1"/>
</dbReference>
<dbReference type="PROSITE" id="PS01199">
    <property type="entry name" value="RIBOSOMAL_L1"/>
    <property type="match status" value="1"/>
</dbReference>
<reference key="1">
    <citation type="journal article" date="2001" name="J. Bacteriol.">
        <title>Genome of the bacterium Streptococcus pneumoniae strain R6.</title>
        <authorList>
            <person name="Hoskins J."/>
            <person name="Alborn W.E. Jr."/>
            <person name="Arnold J."/>
            <person name="Blaszczak L.C."/>
            <person name="Burgett S."/>
            <person name="DeHoff B.S."/>
            <person name="Estrem S.T."/>
            <person name="Fritz L."/>
            <person name="Fu D.-J."/>
            <person name="Fuller W."/>
            <person name="Geringer C."/>
            <person name="Gilmour R."/>
            <person name="Glass J.S."/>
            <person name="Khoja H."/>
            <person name="Kraft A.R."/>
            <person name="Lagace R.E."/>
            <person name="LeBlanc D.J."/>
            <person name="Lee L.N."/>
            <person name="Lefkowitz E.J."/>
            <person name="Lu J."/>
            <person name="Matsushima P."/>
            <person name="McAhren S.M."/>
            <person name="McHenney M."/>
            <person name="McLeaster K."/>
            <person name="Mundy C.W."/>
            <person name="Nicas T.I."/>
            <person name="Norris F.H."/>
            <person name="O'Gara M."/>
            <person name="Peery R.B."/>
            <person name="Robertson G.T."/>
            <person name="Rockey P."/>
            <person name="Sun P.-M."/>
            <person name="Winkler M.E."/>
            <person name="Yang Y."/>
            <person name="Young-Bellido M."/>
            <person name="Zhao G."/>
            <person name="Zook C.A."/>
            <person name="Baltz R.H."/>
            <person name="Jaskunas S.R."/>
            <person name="Rosteck P.R. Jr."/>
            <person name="Skatrud P.L."/>
            <person name="Glass J.I."/>
        </authorList>
    </citation>
    <scope>NUCLEOTIDE SEQUENCE [LARGE SCALE GENOMIC DNA]</scope>
    <source>
        <strain>ATCC BAA-255 / R6</strain>
    </source>
</reference>